<reference key="1">
    <citation type="journal article" date="2011" name="Stand. Genomic Sci.">
        <title>Complete genome sequence of Rhodospirillum rubrum type strain (S1).</title>
        <authorList>
            <person name="Munk A.C."/>
            <person name="Copeland A."/>
            <person name="Lucas S."/>
            <person name="Lapidus A."/>
            <person name="Del Rio T.G."/>
            <person name="Barry K."/>
            <person name="Detter J.C."/>
            <person name="Hammon N."/>
            <person name="Israni S."/>
            <person name="Pitluck S."/>
            <person name="Brettin T."/>
            <person name="Bruce D."/>
            <person name="Han C."/>
            <person name="Tapia R."/>
            <person name="Gilna P."/>
            <person name="Schmutz J."/>
            <person name="Larimer F."/>
            <person name="Land M."/>
            <person name="Kyrpides N.C."/>
            <person name="Mavromatis K."/>
            <person name="Richardson P."/>
            <person name="Rohde M."/>
            <person name="Goeker M."/>
            <person name="Klenk H.P."/>
            <person name="Zhang Y."/>
            <person name="Roberts G.P."/>
            <person name="Reslewic S."/>
            <person name="Schwartz D.C."/>
        </authorList>
    </citation>
    <scope>NUCLEOTIDE SEQUENCE [LARGE SCALE GENOMIC DNA]</scope>
    <source>
        <strain>ATCC 11170 / ATH 1.1.1 / DSM 467 / LMG 4362 / NCIMB 8255 / S1</strain>
    </source>
</reference>
<comment type="function">
    <text evidence="1">Catalyzes the last two sequential reactions in the de novo biosynthetic pathway for UDP-N-acetylglucosamine (UDP-GlcNAc). The C-terminal domain catalyzes the transfer of acetyl group from acetyl coenzyme A to glucosamine-1-phosphate (GlcN-1-P) to produce N-acetylglucosamine-1-phosphate (GlcNAc-1-P), which is converted into UDP-GlcNAc by the transfer of uridine 5-monophosphate (from uridine 5-triphosphate), a reaction catalyzed by the N-terminal domain.</text>
</comment>
<comment type="catalytic activity">
    <reaction evidence="1">
        <text>alpha-D-glucosamine 1-phosphate + acetyl-CoA = N-acetyl-alpha-D-glucosamine 1-phosphate + CoA + H(+)</text>
        <dbReference type="Rhea" id="RHEA:13725"/>
        <dbReference type="ChEBI" id="CHEBI:15378"/>
        <dbReference type="ChEBI" id="CHEBI:57287"/>
        <dbReference type="ChEBI" id="CHEBI:57288"/>
        <dbReference type="ChEBI" id="CHEBI:57776"/>
        <dbReference type="ChEBI" id="CHEBI:58516"/>
        <dbReference type="EC" id="2.3.1.157"/>
    </reaction>
</comment>
<comment type="catalytic activity">
    <reaction evidence="1">
        <text>N-acetyl-alpha-D-glucosamine 1-phosphate + UTP + H(+) = UDP-N-acetyl-alpha-D-glucosamine + diphosphate</text>
        <dbReference type="Rhea" id="RHEA:13509"/>
        <dbReference type="ChEBI" id="CHEBI:15378"/>
        <dbReference type="ChEBI" id="CHEBI:33019"/>
        <dbReference type="ChEBI" id="CHEBI:46398"/>
        <dbReference type="ChEBI" id="CHEBI:57705"/>
        <dbReference type="ChEBI" id="CHEBI:57776"/>
        <dbReference type="EC" id="2.7.7.23"/>
    </reaction>
</comment>
<comment type="cofactor">
    <cofactor evidence="1">
        <name>Mg(2+)</name>
        <dbReference type="ChEBI" id="CHEBI:18420"/>
    </cofactor>
    <text evidence="1">Binds 1 Mg(2+) ion per subunit.</text>
</comment>
<comment type="pathway">
    <text evidence="1">Nucleotide-sugar biosynthesis; UDP-N-acetyl-alpha-D-glucosamine biosynthesis; N-acetyl-alpha-D-glucosamine 1-phosphate from alpha-D-glucosamine 6-phosphate (route II): step 2/2.</text>
</comment>
<comment type="pathway">
    <text evidence="1">Nucleotide-sugar biosynthesis; UDP-N-acetyl-alpha-D-glucosamine biosynthesis; UDP-N-acetyl-alpha-D-glucosamine from N-acetyl-alpha-D-glucosamine 1-phosphate: step 1/1.</text>
</comment>
<comment type="pathway">
    <text evidence="1">Bacterial outer membrane biogenesis; LPS lipid A biosynthesis.</text>
</comment>
<comment type="subunit">
    <text evidence="1">Homotrimer.</text>
</comment>
<comment type="subcellular location">
    <subcellularLocation>
        <location evidence="1">Cytoplasm</location>
    </subcellularLocation>
</comment>
<comment type="similarity">
    <text evidence="1">In the N-terminal section; belongs to the N-acetylglucosamine-1-phosphate uridyltransferase family.</text>
</comment>
<comment type="similarity">
    <text evidence="1">In the C-terminal section; belongs to the transferase hexapeptide repeat family.</text>
</comment>
<comment type="sequence caution" evidence="2">
    <conflict type="erroneous initiation">
        <sequence resource="EMBL-CDS" id="ABC23825"/>
    </conflict>
</comment>
<gene>
    <name evidence="1" type="primary">glmU</name>
    <name type="ordered locus">Rru_A3030</name>
</gene>
<protein>
    <recommendedName>
        <fullName evidence="1">Bifunctional protein GlmU</fullName>
    </recommendedName>
    <domain>
        <recommendedName>
            <fullName evidence="1">UDP-N-acetylglucosamine pyrophosphorylase</fullName>
            <ecNumber evidence="1">2.7.7.23</ecNumber>
        </recommendedName>
        <alternativeName>
            <fullName evidence="1">N-acetylglucosamine-1-phosphate uridyltransferase</fullName>
        </alternativeName>
    </domain>
    <domain>
        <recommendedName>
            <fullName evidence="1">Glucosamine-1-phosphate N-acetyltransferase</fullName>
            <ecNumber evidence="1">2.3.1.157</ecNumber>
        </recommendedName>
    </domain>
</protein>
<accession>Q2RPX0</accession>
<dbReference type="EC" id="2.7.7.23" evidence="1"/>
<dbReference type="EC" id="2.3.1.157" evidence="1"/>
<dbReference type="EMBL" id="CP000230">
    <property type="protein sequence ID" value="ABC23825.1"/>
    <property type="status" value="ALT_INIT"/>
    <property type="molecule type" value="Genomic_DNA"/>
</dbReference>
<dbReference type="RefSeq" id="WP_014626497.1">
    <property type="nucleotide sequence ID" value="NC_007643.1"/>
</dbReference>
<dbReference type="RefSeq" id="YP_428112.1">
    <property type="nucleotide sequence ID" value="NC_007643.1"/>
</dbReference>
<dbReference type="SMR" id="Q2RPX0"/>
<dbReference type="STRING" id="269796.Rru_A3030"/>
<dbReference type="EnsemblBacteria" id="ABC23825">
    <property type="protein sequence ID" value="ABC23825"/>
    <property type="gene ID" value="Rru_A3030"/>
</dbReference>
<dbReference type="KEGG" id="rru:Rru_A3030"/>
<dbReference type="PATRIC" id="fig|269796.9.peg.3140"/>
<dbReference type="eggNOG" id="COG1207">
    <property type="taxonomic scope" value="Bacteria"/>
</dbReference>
<dbReference type="HOGENOM" id="CLU_029499_15_2_5"/>
<dbReference type="PhylomeDB" id="Q2RPX0"/>
<dbReference type="UniPathway" id="UPA00113">
    <property type="reaction ID" value="UER00532"/>
</dbReference>
<dbReference type="UniPathway" id="UPA00113">
    <property type="reaction ID" value="UER00533"/>
</dbReference>
<dbReference type="UniPathway" id="UPA00973"/>
<dbReference type="Proteomes" id="UP000001929">
    <property type="component" value="Chromosome"/>
</dbReference>
<dbReference type="GO" id="GO:0005737">
    <property type="term" value="C:cytoplasm"/>
    <property type="evidence" value="ECO:0007669"/>
    <property type="project" value="UniProtKB-SubCell"/>
</dbReference>
<dbReference type="GO" id="GO:0016020">
    <property type="term" value="C:membrane"/>
    <property type="evidence" value="ECO:0007669"/>
    <property type="project" value="GOC"/>
</dbReference>
<dbReference type="GO" id="GO:0019134">
    <property type="term" value="F:glucosamine-1-phosphate N-acetyltransferase activity"/>
    <property type="evidence" value="ECO:0007669"/>
    <property type="project" value="UniProtKB-UniRule"/>
</dbReference>
<dbReference type="GO" id="GO:0000287">
    <property type="term" value="F:magnesium ion binding"/>
    <property type="evidence" value="ECO:0007669"/>
    <property type="project" value="UniProtKB-UniRule"/>
</dbReference>
<dbReference type="GO" id="GO:0003977">
    <property type="term" value="F:UDP-N-acetylglucosamine diphosphorylase activity"/>
    <property type="evidence" value="ECO:0007669"/>
    <property type="project" value="UniProtKB-UniRule"/>
</dbReference>
<dbReference type="GO" id="GO:0000902">
    <property type="term" value="P:cell morphogenesis"/>
    <property type="evidence" value="ECO:0007669"/>
    <property type="project" value="UniProtKB-UniRule"/>
</dbReference>
<dbReference type="GO" id="GO:0071555">
    <property type="term" value="P:cell wall organization"/>
    <property type="evidence" value="ECO:0007669"/>
    <property type="project" value="UniProtKB-KW"/>
</dbReference>
<dbReference type="GO" id="GO:0009245">
    <property type="term" value="P:lipid A biosynthetic process"/>
    <property type="evidence" value="ECO:0007669"/>
    <property type="project" value="UniProtKB-UniRule"/>
</dbReference>
<dbReference type="GO" id="GO:0009252">
    <property type="term" value="P:peptidoglycan biosynthetic process"/>
    <property type="evidence" value="ECO:0007669"/>
    <property type="project" value="UniProtKB-UniRule"/>
</dbReference>
<dbReference type="GO" id="GO:0008360">
    <property type="term" value="P:regulation of cell shape"/>
    <property type="evidence" value="ECO:0007669"/>
    <property type="project" value="UniProtKB-KW"/>
</dbReference>
<dbReference type="GO" id="GO:0006048">
    <property type="term" value="P:UDP-N-acetylglucosamine biosynthetic process"/>
    <property type="evidence" value="ECO:0007669"/>
    <property type="project" value="UniProtKB-UniPathway"/>
</dbReference>
<dbReference type="CDD" id="cd02540">
    <property type="entry name" value="GT2_GlmU_N_bac"/>
    <property type="match status" value="1"/>
</dbReference>
<dbReference type="CDD" id="cd03353">
    <property type="entry name" value="LbH_GlmU_C"/>
    <property type="match status" value="1"/>
</dbReference>
<dbReference type="Gene3D" id="2.160.10.10">
    <property type="entry name" value="Hexapeptide repeat proteins"/>
    <property type="match status" value="1"/>
</dbReference>
<dbReference type="Gene3D" id="3.90.550.10">
    <property type="entry name" value="Spore Coat Polysaccharide Biosynthesis Protein SpsA, Chain A"/>
    <property type="match status" value="1"/>
</dbReference>
<dbReference type="HAMAP" id="MF_01631">
    <property type="entry name" value="GlmU"/>
    <property type="match status" value="1"/>
</dbReference>
<dbReference type="InterPro" id="IPR005882">
    <property type="entry name" value="Bifunctional_GlmU"/>
</dbReference>
<dbReference type="InterPro" id="IPR050065">
    <property type="entry name" value="GlmU-like"/>
</dbReference>
<dbReference type="InterPro" id="IPR038009">
    <property type="entry name" value="GlmU_C_LbH"/>
</dbReference>
<dbReference type="InterPro" id="IPR001451">
    <property type="entry name" value="Hexapep"/>
</dbReference>
<dbReference type="InterPro" id="IPR018357">
    <property type="entry name" value="Hexapep_transf_CS"/>
</dbReference>
<dbReference type="InterPro" id="IPR025877">
    <property type="entry name" value="MobA-like_NTP_Trfase"/>
</dbReference>
<dbReference type="InterPro" id="IPR029044">
    <property type="entry name" value="Nucleotide-diphossugar_trans"/>
</dbReference>
<dbReference type="InterPro" id="IPR011004">
    <property type="entry name" value="Trimer_LpxA-like_sf"/>
</dbReference>
<dbReference type="NCBIfam" id="TIGR01173">
    <property type="entry name" value="glmU"/>
    <property type="match status" value="1"/>
</dbReference>
<dbReference type="NCBIfam" id="NF010933">
    <property type="entry name" value="PRK14353.1"/>
    <property type="match status" value="1"/>
</dbReference>
<dbReference type="PANTHER" id="PTHR43584:SF3">
    <property type="entry name" value="BIFUNCTIONAL PROTEIN GLMU"/>
    <property type="match status" value="1"/>
</dbReference>
<dbReference type="PANTHER" id="PTHR43584">
    <property type="entry name" value="NUCLEOTIDYL TRANSFERASE"/>
    <property type="match status" value="1"/>
</dbReference>
<dbReference type="Pfam" id="PF00132">
    <property type="entry name" value="Hexapep"/>
    <property type="match status" value="2"/>
</dbReference>
<dbReference type="Pfam" id="PF12804">
    <property type="entry name" value="NTP_transf_3"/>
    <property type="match status" value="1"/>
</dbReference>
<dbReference type="SUPFAM" id="SSF53448">
    <property type="entry name" value="Nucleotide-diphospho-sugar transferases"/>
    <property type="match status" value="1"/>
</dbReference>
<dbReference type="SUPFAM" id="SSF51161">
    <property type="entry name" value="Trimeric LpxA-like enzymes"/>
    <property type="match status" value="1"/>
</dbReference>
<dbReference type="PROSITE" id="PS00101">
    <property type="entry name" value="HEXAPEP_TRANSFERASES"/>
    <property type="match status" value="1"/>
</dbReference>
<organism>
    <name type="scientific">Rhodospirillum rubrum (strain ATCC 11170 / ATH 1.1.1 / DSM 467 / LMG 4362 / NCIMB 8255 / S1)</name>
    <dbReference type="NCBI Taxonomy" id="269796"/>
    <lineage>
        <taxon>Bacteria</taxon>
        <taxon>Pseudomonadati</taxon>
        <taxon>Pseudomonadota</taxon>
        <taxon>Alphaproteobacteria</taxon>
        <taxon>Rhodospirillales</taxon>
        <taxon>Rhodospirillaceae</taxon>
        <taxon>Rhodospirillum</taxon>
    </lineage>
</organism>
<sequence>MTKTAAVILAAGQGTRMKSALPKVLHPLAGRPMVAHLIHALGAVAPSRTVVVIGPGMESVADRVAPLPTVLQAERLGTAHAVAQAGEALAGFDGTVLILYGDTPLITPETLTRMVEARLAAEDPAVVVLGFRPADPLQYGRLITSPAGLEAIVEYKDATAEQRAIGLCNSGVMAVDGRVLFALLAAVGNDNAKGEYYLTDIVALARGMGRACAVVEGAAEELLGVNSRSELAAAEAVIQGRLREKAMEGGATLTAPETVFFSADTRLGRDVSIGPFVTFGPGVEIGDGVEIKGFCHIEGARVAAKATLGPYARLRPGATIAEGAHVGNFVEIKNSAVEQGAKVNHLTYIGDARVGARANIGAGTITCNYDGFGKYHTDIGEGAFIGSNTALVAPVSIGAGAIIGAGSTIARDVEADALALTRGPHEVRPGWAAKFRAHMRRLTGKN</sequence>
<name>GLMU_RHORT</name>
<proteinExistence type="inferred from homology"/>
<keyword id="KW-0012">Acyltransferase</keyword>
<keyword id="KW-0133">Cell shape</keyword>
<keyword id="KW-0961">Cell wall biogenesis/degradation</keyword>
<keyword id="KW-0963">Cytoplasm</keyword>
<keyword id="KW-0460">Magnesium</keyword>
<keyword id="KW-0479">Metal-binding</keyword>
<keyword id="KW-0511">Multifunctional enzyme</keyword>
<keyword id="KW-0548">Nucleotidyltransferase</keyword>
<keyword id="KW-0573">Peptidoglycan synthesis</keyword>
<keyword id="KW-1185">Reference proteome</keyword>
<keyword id="KW-0677">Repeat</keyword>
<keyword id="KW-0808">Transferase</keyword>
<feature type="chain" id="PRO_0000244307" description="Bifunctional protein GlmU">
    <location>
        <begin position="1"/>
        <end position="446"/>
    </location>
</feature>
<feature type="region of interest" description="Pyrophosphorylase" evidence="1">
    <location>
        <begin position="1"/>
        <end position="228"/>
    </location>
</feature>
<feature type="region of interest" description="Linker" evidence="1">
    <location>
        <begin position="229"/>
        <end position="249"/>
    </location>
</feature>
<feature type="region of interest" description="N-acetyltransferase" evidence="1">
    <location>
        <begin position="250"/>
        <end position="446"/>
    </location>
</feature>
<feature type="active site" description="Proton acceptor" evidence="1">
    <location>
        <position position="345"/>
    </location>
</feature>
<feature type="binding site" evidence="1">
    <location>
        <begin position="9"/>
        <end position="12"/>
    </location>
    <ligand>
        <name>UDP-N-acetyl-alpha-D-glucosamine</name>
        <dbReference type="ChEBI" id="CHEBI:57705"/>
    </ligand>
</feature>
<feature type="binding site" evidence="1">
    <location>
        <position position="23"/>
    </location>
    <ligand>
        <name>UDP-N-acetyl-alpha-D-glucosamine</name>
        <dbReference type="ChEBI" id="CHEBI:57705"/>
    </ligand>
</feature>
<feature type="binding site" evidence="1">
    <location>
        <position position="72"/>
    </location>
    <ligand>
        <name>UDP-N-acetyl-alpha-D-glucosamine</name>
        <dbReference type="ChEBI" id="CHEBI:57705"/>
    </ligand>
</feature>
<feature type="binding site" evidence="1">
    <location>
        <begin position="77"/>
        <end position="78"/>
    </location>
    <ligand>
        <name>UDP-N-acetyl-alpha-D-glucosamine</name>
        <dbReference type="ChEBI" id="CHEBI:57705"/>
    </ligand>
</feature>
<feature type="binding site" evidence="1">
    <location>
        <begin position="100"/>
        <end position="102"/>
    </location>
    <ligand>
        <name>UDP-N-acetyl-alpha-D-glucosamine</name>
        <dbReference type="ChEBI" id="CHEBI:57705"/>
    </ligand>
</feature>
<feature type="binding site" evidence="1">
    <location>
        <position position="102"/>
    </location>
    <ligand>
        <name>Mg(2+)</name>
        <dbReference type="ChEBI" id="CHEBI:18420"/>
    </ligand>
</feature>
<feature type="binding site" evidence="1">
    <location>
        <position position="140"/>
    </location>
    <ligand>
        <name>UDP-N-acetyl-alpha-D-glucosamine</name>
        <dbReference type="ChEBI" id="CHEBI:57705"/>
    </ligand>
</feature>
<feature type="binding site" evidence="1">
    <location>
        <position position="154"/>
    </location>
    <ligand>
        <name>UDP-N-acetyl-alpha-D-glucosamine</name>
        <dbReference type="ChEBI" id="CHEBI:57705"/>
    </ligand>
</feature>
<feature type="binding site" evidence="1">
    <location>
        <position position="169"/>
    </location>
    <ligand>
        <name>UDP-N-acetyl-alpha-D-glucosamine</name>
        <dbReference type="ChEBI" id="CHEBI:57705"/>
    </ligand>
</feature>
<feature type="binding site" evidence="1">
    <location>
        <position position="226"/>
    </location>
    <ligand>
        <name>Mg(2+)</name>
        <dbReference type="ChEBI" id="CHEBI:18420"/>
    </ligand>
</feature>
<feature type="binding site" evidence="1">
    <location>
        <position position="226"/>
    </location>
    <ligand>
        <name>UDP-N-acetyl-alpha-D-glucosamine</name>
        <dbReference type="ChEBI" id="CHEBI:57705"/>
    </ligand>
</feature>
<feature type="binding site" evidence="1">
    <location>
        <position position="315"/>
    </location>
    <ligand>
        <name>UDP-N-acetyl-alpha-D-glucosamine</name>
        <dbReference type="ChEBI" id="CHEBI:57705"/>
    </ligand>
</feature>
<feature type="binding site" evidence="1">
    <location>
        <position position="333"/>
    </location>
    <ligand>
        <name>UDP-N-acetyl-alpha-D-glucosamine</name>
        <dbReference type="ChEBI" id="CHEBI:57705"/>
    </ligand>
</feature>
<feature type="binding site" evidence="1">
    <location>
        <position position="348"/>
    </location>
    <ligand>
        <name>UDP-N-acetyl-alpha-D-glucosamine</name>
        <dbReference type="ChEBI" id="CHEBI:57705"/>
    </ligand>
</feature>
<feature type="binding site" evidence="1">
    <location>
        <position position="359"/>
    </location>
    <ligand>
        <name>UDP-N-acetyl-alpha-D-glucosamine</name>
        <dbReference type="ChEBI" id="CHEBI:57705"/>
    </ligand>
</feature>
<feature type="binding site" evidence="1">
    <location>
        <position position="362"/>
    </location>
    <ligand>
        <name>acetyl-CoA</name>
        <dbReference type="ChEBI" id="CHEBI:57288"/>
    </ligand>
</feature>
<feature type="binding site" evidence="1">
    <location>
        <begin position="368"/>
        <end position="369"/>
    </location>
    <ligand>
        <name>acetyl-CoA</name>
        <dbReference type="ChEBI" id="CHEBI:57288"/>
    </ligand>
</feature>
<feature type="binding site" evidence="1">
    <location>
        <position position="387"/>
    </location>
    <ligand>
        <name>acetyl-CoA</name>
        <dbReference type="ChEBI" id="CHEBI:57288"/>
    </ligand>
</feature>
<feature type="binding site" evidence="1">
    <location>
        <position position="405"/>
    </location>
    <ligand>
        <name>acetyl-CoA</name>
        <dbReference type="ChEBI" id="CHEBI:57288"/>
    </ligand>
</feature>
<feature type="binding site" evidence="1">
    <location>
        <position position="422"/>
    </location>
    <ligand>
        <name>acetyl-CoA</name>
        <dbReference type="ChEBI" id="CHEBI:57288"/>
    </ligand>
</feature>
<evidence type="ECO:0000255" key="1">
    <source>
        <dbReference type="HAMAP-Rule" id="MF_01631"/>
    </source>
</evidence>
<evidence type="ECO:0000305" key="2"/>